<name>DNAK1_ALIF1</name>
<accession>Q5E4T4</accession>
<organism>
    <name type="scientific">Aliivibrio fischeri (strain ATCC 700601 / ES114)</name>
    <name type="common">Vibrio fischeri</name>
    <dbReference type="NCBI Taxonomy" id="312309"/>
    <lineage>
        <taxon>Bacteria</taxon>
        <taxon>Pseudomonadati</taxon>
        <taxon>Pseudomonadota</taxon>
        <taxon>Gammaproteobacteria</taxon>
        <taxon>Vibrionales</taxon>
        <taxon>Vibrionaceae</taxon>
        <taxon>Aliivibrio</taxon>
    </lineage>
</organism>
<proteinExistence type="inferred from homology"/>
<gene>
    <name evidence="1" type="primary">dnaK1</name>
    <name type="ordered locus">VF_1467</name>
</gene>
<dbReference type="EMBL" id="CP000020">
    <property type="protein sequence ID" value="AAW85962.1"/>
    <property type="molecule type" value="Genomic_DNA"/>
</dbReference>
<dbReference type="RefSeq" id="WP_011262053.1">
    <property type="nucleotide sequence ID" value="NC_006840.2"/>
</dbReference>
<dbReference type="RefSeq" id="YP_204850.1">
    <property type="nucleotide sequence ID" value="NC_006840.2"/>
</dbReference>
<dbReference type="SMR" id="Q5E4T4"/>
<dbReference type="STRING" id="312309.VF_1467"/>
<dbReference type="EnsemblBacteria" id="AAW85962">
    <property type="protein sequence ID" value="AAW85962"/>
    <property type="gene ID" value="VF_1467"/>
</dbReference>
<dbReference type="GeneID" id="54164141"/>
<dbReference type="KEGG" id="vfi:VF_1467"/>
<dbReference type="PATRIC" id="fig|312309.11.peg.1484"/>
<dbReference type="eggNOG" id="COG0443">
    <property type="taxonomic scope" value="Bacteria"/>
</dbReference>
<dbReference type="HOGENOM" id="CLU_005965_2_1_6"/>
<dbReference type="OrthoDB" id="9766019at2"/>
<dbReference type="Proteomes" id="UP000000537">
    <property type="component" value="Chromosome I"/>
</dbReference>
<dbReference type="GO" id="GO:0005524">
    <property type="term" value="F:ATP binding"/>
    <property type="evidence" value="ECO:0007669"/>
    <property type="project" value="UniProtKB-UniRule"/>
</dbReference>
<dbReference type="GO" id="GO:0140662">
    <property type="term" value="F:ATP-dependent protein folding chaperone"/>
    <property type="evidence" value="ECO:0007669"/>
    <property type="project" value="InterPro"/>
</dbReference>
<dbReference type="GO" id="GO:0051082">
    <property type="term" value="F:unfolded protein binding"/>
    <property type="evidence" value="ECO:0007669"/>
    <property type="project" value="InterPro"/>
</dbReference>
<dbReference type="CDD" id="cd10234">
    <property type="entry name" value="ASKHA_NBD_HSP70_DnaK-like"/>
    <property type="match status" value="1"/>
</dbReference>
<dbReference type="FunFam" id="2.60.34.10:FF:000014">
    <property type="entry name" value="Chaperone protein DnaK HSP70"/>
    <property type="match status" value="1"/>
</dbReference>
<dbReference type="FunFam" id="3.30.30.30:FF:000003">
    <property type="entry name" value="Heat shock protein 9"/>
    <property type="match status" value="1"/>
</dbReference>
<dbReference type="FunFam" id="1.20.1270.10:FF:000001">
    <property type="entry name" value="Molecular chaperone DnaK"/>
    <property type="match status" value="1"/>
</dbReference>
<dbReference type="FunFam" id="3.30.420.40:FF:000004">
    <property type="entry name" value="Molecular chaperone DnaK"/>
    <property type="match status" value="1"/>
</dbReference>
<dbReference type="FunFam" id="3.90.640.10:FF:000003">
    <property type="entry name" value="Molecular chaperone DnaK"/>
    <property type="match status" value="1"/>
</dbReference>
<dbReference type="Gene3D" id="1.20.1270.10">
    <property type="match status" value="1"/>
</dbReference>
<dbReference type="Gene3D" id="3.30.420.40">
    <property type="match status" value="2"/>
</dbReference>
<dbReference type="Gene3D" id="3.90.640.10">
    <property type="entry name" value="Actin, Chain A, domain 4"/>
    <property type="match status" value="1"/>
</dbReference>
<dbReference type="Gene3D" id="2.60.34.10">
    <property type="entry name" value="Substrate Binding Domain Of DNAk, Chain A, domain 1"/>
    <property type="match status" value="1"/>
</dbReference>
<dbReference type="HAMAP" id="MF_00332">
    <property type="entry name" value="DnaK"/>
    <property type="match status" value="1"/>
</dbReference>
<dbReference type="InterPro" id="IPR043129">
    <property type="entry name" value="ATPase_NBD"/>
</dbReference>
<dbReference type="InterPro" id="IPR012725">
    <property type="entry name" value="Chaperone_DnaK"/>
</dbReference>
<dbReference type="InterPro" id="IPR018181">
    <property type="entry name" value="Heat_shock_70_CS"/>
</dbReference>
<dbReference type="InterPro" id="IPR029048">
    <property type="entry name" value="HSP70_C_sf"/>
</dbReference>
<dbReference type="InterPro" id="IPR029047">
    <property type="entry name" value="HSP70_peptide-bd_sf"/>
</dbReference>
<dbReference type="InterPro" id="IPR013126">
    <property type="entry name" value="Hsp_70_fam"/>
</dbReference>
<dbReference type="NCBIfam" id="NF001413">
    <property type="entry name" value="PRK00290.1"/>
    <property type="match status" value="1"/>
</dbReference>
<dbReference type="NCBIfam" id="TIGR02350">
    <property type="entry name" value="prok_dnaK"/>
    <property type="match status" value="1"/>
</dbReference>
<dbReference type="PANTHER" id="PTHR19375">
    <property type="entry name" value="HEAT SHOCK PROTEIN 70KDA"/>
    <property type="match status" value="1"/>
</dbReference>
<dbReference type="Pfam" id="PF00012">
    <property type="entry name" value="HSP70"/>
    <property type="match status" value="1"/>
</dbReference>
<dbReference type="PRINTS" id="PR00301">
    <property type="entry name" value="HEATSHOCK70"/>
</dbReference>
<dbReference type="SUPFAM" id="SSF53067">
    <property type="entry name" value="Actin-like ATPase domain"/>
    <property type="match status" value="2"/>
</dbReference>
<dbReference type="SUPFAM" id="SSF100934">
    <property type="entry name" value="Heat shock protein 70kD (HSP70), C-terminal subdomain"/>
    <property type="match status" value="1"/>
</dbReference>
<dbReference type="SUPFAM" id="SSF100920">
    <property type="entry name" value="Heat shock protein 70kD (HSP70), peptide-binding domain"/>
    <property type="match status" value="1"/>
</dbReference>
<dbReference type="PROSITE" id="PS00297">
    <property type="entry name" value="HSP70_1"/>
    <property type="match status" value="1"/>
</dbReference>
<dbReference type="PROSITE" id="PS00329">
    <property type="entry name" value="HSP70_2"/>
    <property type="match status" value="1"/>
</dbReference>
<dbReference type="PROSITE" id="PS01036">
    <property type="entry name" value="HSP70_3"/>
    <property type="match status" value="1"/>
</dbReference>
<reference key="1">
    <citation type="journal article" date="2005" name="Proc. Natl. Acad. Sci. U.S.A.">
        <title>Complete genome sequence of Vibrio fischeri: a symbiotic bacterium with pathogenic congeners.</title>
        <authorList>
            <person name="Ruby E.G."/>
            <person name="Urbanowski M."/>
            <person name="Campbell J."/>
            <person name="Dunn A."/>
            <person name="Faini M."/>
            <person name="Gunsalus R."/>
            <person name="Lostroh P."/>
            <person name="Lupp C."/>
            <person name="McCann J."/>
            <person name="Millikan D."/>
            <person name="Schaefer A."/>
            <person name="Stabb E."/>
            <person name="Stevens A."/>
            <person name="Visick K."/>
            <person name="Whistler C."/>
            <person name="Greenberg E.P."/>
        </authorList>
    </citation>
    <scope>NUCLEOTIDE SEQUENCE [LARGE SCALE GENOMIC DNA]</scope>
    <source>
        <strain>ATCC 700601 / ES114</strain>
    </source>
</reference>
<protein>
    <recommendedName>
        <fullName evidence="1">Chaperone protein DnaK 1</fullName>
    </recommendedName>
    <alternativeName>
        <fullName evidence="1">HSP70 1</fullName>
    </alternativeName>
    <alternativeName>
        <fullName evidence="1">Heat shock 70 kDa protein 1</fullName>
    </alternativeName>
    <alternativeName>
        <fullName evidence="1">Heat shock protein 70 1</fullName>
    </alternativeName>
</protein>
<keyword id="KW-0067">ATP-binding</keyword>
<keyword id="KW-0143">Chaperone</keyword>
<keyword id="KW-0547">Nucleotide-binding</keyword>
<keyword id="KW-0597">Phosphoprotein</keyword>
<keyword id="KW-1185">Reference proteome</keyword>
<keyword id="KW-0346">Stress response</keyword>
<sequence length="632" mass="68364">MGKIIGIDLGTTNSCVAVLDGDTPRILENAEGERTTASVIAYTDGETLVGQPAKRQAITNPQNTLFAIKRLIGRRFEDEEVQRDIEIMPYKIIKADNGDAWVEAKGQKMAAPQVSAEILKKMKKTAEDFLGEEVTGAVVTVPAYFNDAQRQATKDAGRIAGLDVKRIINEPTAAALAYGLDKKGGDRTIAVYDLGGGTFDISIIEIDNVDGEQTFEVLATNGDTHLGGEDFDNRLINFLVDEFKKEQGFDLKNDPLAMQRVKEAAEKAKIELSSAQQTDVNLPYVTADATGPKHMNIKVTRAKLESLVEDLVVRTLEPLKVALADADLTIDGITDVILVGGQTRMPMVQAKVAEFFGKEARRDVNPDEAVAMGAAVQGGVLAGDVKDVLLLDVTPLSFGIETMGGVMTKLIEKNTTIPTKADQTFSTAEDNQSAVTIHVLQGERKQASYNKSLGQFNLEGIQAAPRGMPQIEVTFDLDADGILNVSAKDKSTGKEQKITIQASGGLTDEEIEAMVQEAEANKDADKKFEELVTARNQADQMIHGTKKQIEEAGDDLPTDEKEKIEAAITALEGVKSGDDKEAIDAKTQELMQAAQKLMEIAQQKAQAQQGAQAGEQPKQEDDVVDAEFEEVK</sequence>
<feature type="chain" id="PRO_0000226026" description="Chaperone protein DnaK 1">
    <location>
        <begin position="1"/>
        <end position="632"/>
    </location>
</feature>
<feature type="region of interest" description="Disordered" evidence="2">
    <location>
        <begin position="601"/>
        <end position="632"/>
    </location>
</feature>
<feature type="compositionally biased region" description="Low complexity" evidence="2">
    <location>
        <begin position="601"/>
        <end position="616"/>
    </location>
</feature>
<feature type="compositionally biased region" description="Acidic residues" evidence="2">
    <location>
        <begin position="622"/>
        <end position="632"/>
    </location>
</feature>
<feature type="modified residue" description="Phosphothreonine; by autocatalysis" evidence="1">
    <location>
        <position position="198"/>
    </location>
</feature>
<comment type="function">
    <text evidence="1">Acts as a chaperone.</text>
</comment>
<comment type="induction">
    <text evidence="1">By stress conditions e.g. heat shock.</text>
</comment>
<comment type="similarity">
    <text evidence="1">Belongs to the heat shock protein 70 family.</text>
</comment>
<evidence type="ECO:0000255" key="1">
    <source>
        <dbReference type="HAMAP-Rule" id="MF_00332"/>
    </source>
</evidence>
<evidence type="ECO:0000256" key="2">
    <source>
        <dbReference type="SAM" id="MobiDB-lite"/>
    </source>
</evidence>